<reference key="1">
    <citation type="submission" date="2004-03" db="EMBL/GenBank/DDBJ databases">
        <authorList>
            <consortium name="NIH - Zebrafish Gene Collection (ZGC) project"/>
        </authorList>
    </citation>
    <scope>NUCLEOTIDE SEQUENCE [LARGE SCALE MRNA]</scope>
    <source>
        <strain>AB</strain>
        <tissue>Kidney</tissue>
    </source>
</reference>
<name>OLA1_DANRE</name>
<comment type="function">
    <text evidence="2">Hydrolyzes ATP, and can also hydrolyze GTP with lower efficiency. Has lower affinity for GTP.</text>
</comment>
<comment type="cofactor">
    <cofactor evidence="1">
        <name>Mg(2+)</name>
        <dbReference type="ChEBI" id="CHEBI:18420"/>
    </cofactor>
</comment>
<comment type="subunit">
    <text evidence="2">Monomer.</text>
</comment>
<comment type="subcellular location">
    <subcellularLocation>
        <location evidence="2">Cytoplasm</location>
    </subcellularLocation>
    <subcellularLocation>
        <location evidence="2">Nucleus</location>
    </subcellularLocation>
    <subcellularLocation>
        <location evidence="2">Nucleus</location>
        <location evidence="2">Nucleolus</location>
    </subcellularLocation>
    <text evidence="2">Predominantly cytoplasmic, shuttles between the nucleus and the cytoplasm.</text>
</comment>
<comment type="similarity">
    <text evidence="2">Belongs to the TRAFAC class OBG-HflX-like GTPase superfamily. OBG GTPase family. YchF/OLA1 subfamily.</text>
</comment>
<sequence>MPPKKGGDGPKQPPLIGRFGTSLKIGIVGLPNVGKSTFFNVLTKSQAAAENFPFCTIDPNESRVPIPDERFDFLCQYHKPASKVPAFLNVVDIAGLVKGAHAGQGLGNAFLSNIFACDAIFHMTRAFEDEDIIHVEGCVDPVRDIEIIHEELRMKDEEMIGPIIDKLEKTAVRGGDKKLKPEYDIMCKVKSWVVDEKKHVRYYHEWNDKEIEVLNKHLFLTSKPMIYLVNLSEKDYIRKKNKWLVKIKEWVDAHDPGALVIPLSGGFESKYQDMSDEEKQKYCEENKTQSILTKIIKSGYSALQLEYFFTAGPDEVRAWTVRKGTKAPQAAGKIHTDFEKGFIMAEVMKFTDFKEEGSENAAKAAGKYRQQGRNYIVEDGDIIFFKFNTPNQPKKK</sequence>
<proteinExistence type="evidence at transcript level"/>
<organism>
    <name type="scientific">Danio rerio</name>
    <name type="common">Zebrafish</name>
    <name type="synonym">Brachydanio rerio</name>
    <dbReference type="NCBI Taxonomy" id="7955"/>
    <lineage>
        <taxon>Eukaryota</taxon>
        <taxon>Metazoa</taxon>
        <taxon>Chordata</taxon>
        <taxon>Craniata</taxon>
        <taxon>Vertebrata</taxon>
        <taxon>Euteleostomi</taxon>
        <taxon>Actinopterygii</taxon>
        <taxon>Neopterygii</taxon>
        <taxon>Teleostei</taxon>
        <taxon>Ostariophysi</taxon>
        <taxon>Cypriniformes</taxon>
        <taxon>Danionidae</taxon>
        <taxon>Danioninae</taxon>
        <taxon>Danio</taxon>
    </lineage>
</organism>
<accession>Q7ZU42</accession>
<feature type="chain" id="PRO_0000354700" description="Obg-like ATPase 1">
    <location>
        <begin position="1"/>
        <end position="396"/>
    </location>
</feature>
<feature type="domain" description="OBG-type G">
    <location>
        <begin position="23"/>
        <end position="283"/>
    </location>
</feature>
<feature type="domain" description="TGS" evidence="3">
    <location>
        <begin position="304"/>
        <end position="387"/>
    </location>
</feature>
<feature type="short sequence motif" description="Nuclear export signal" evidence="2">
    <location>
        <begin position="267"/>
        <end position="274"/>
    </location>
</feature>
<feature type="binding site" evidence="2">
    <location>
        <begin position="32"/>
        <end position="37"/>
    </location>
    <ligand>
        <name>ATP</name>
        <dbReference type="ChEBI" id="CHEBI:30616"/>
    </ligand>
</feature>
<feature type="binding site" evidence="1">
    <location>
        <position position="36"/>
    </location>
    <ligand>
        <name>Mg(2+)</name>
        <dbReference type="ChEBI" id="CHEBI:18420"/>
    </ligand>
</feature>
<feature type="binding site" evidence="1">
    <location>
        <position position="56"/>
    </location>
    <ligand>
        <name>Mg(2+)</name>
        <dbReference type="ChEBI" id="CHEBI:18420"/>
    </ligand>
</feature>
<feature type="binding site" evidence="2">
    <location>
        <position position="231"/>
    </location>
    <ligand>
        <name>ATP</name>
        <dbReference type="ChEBI" id="CHEBI:30616"/>
    </ligand>
</feature>
<protein>
    <recommendedName>
        <fullName evidence="2">Obg-like ATPase 1</fullName>
    </recommendedName>
</protein>
<evidence type="ECO:0000250" key="1"/>
<evidence type="ECO:0000255" key="2">
    <source>
        <dbReference type="HAMAP-Rule" id="MF_03167"/>
    </source>
</evidence>
<evidence type="ECO:0000255" key="3">
    <source>
        <dbReference type="PROSITE-ProRule" id="PRU01228"/>
    </source>
</evidence>
<dbReference type="EMBL" id="BC051155">
    <property type="protein sequence ID" value="AAH51155.1"/>
    <property type="molecule type" value="mRNA"/>
</dbReference>
<dbReference type="EMBL" id="BC067579">
    <property type="protein sequence ID" value="AAH67579.1"/>
    <property type="molecule type" value="mRNA"/>
</dbReference>
<dbReference type="RefSeq" id="NP_999865.1">
    <property type="nucleotide sequence ID" value="NM_214700.2"/>
</dbReference>
<dbReference type="SMR" id="Q7ZU42"/>
<dbReference type="FunCoup" id="Q7ZU42">
    <property type="interactions" value="1883"/>
</dbReference>
<dbReference type="STRING" id="7955.ENSDARP00000045298"/>
<dbReference type="PaxDb" id="7955-ENSDARP00000045298"/>
<dbReference type="Ensembl" id="ENSDART00000045299">
    <property type="protein sequence ID" value="ENSDARP00000045298"/>
    <property type="gene ID" value="ENSDARG00000044565"/>
</dbReference>
<dbReference type="GeneID" id="326864"/>
<dbReference type="KEGG" id="dre:326864"/>
<dbReference type="AGR" id="ZFIN:ZDB-GENE-030131-5063"/>
<dbReference type="CTD" id="29789"/>
<dbReference type="ZFIN" id="ZDB-GENE-030131-5063">
    <property type="gene designation" value="ola1"/>
</dbReference>
<dbReference type="eggNOG" id="KOG1491">
    <property type="taxonomic scope" value="Eukaryota"/>
</dbReference>
<dbReference type="InParanoid" id="Q7ZU42"/>
<dbReference type="OMA" id="DFHDLCE"/>
<dbReference type="OrthoDB" id="424823at2759"/>
<dbReference type="PhylomeDB" id="Q7ZU42"/>
<dbReference type="TreeFam" id="TF300774"/>
<dbReference type="Reactome" id="R-DRE-114608">
    <property type="pathway name" value="Platelet degranulation"/>
</dbReference>
<dbReference type="PRO" id="PR:Q7ZU42"/>
<dbReference type="Proteomes" id="UP000000437">
    <property type="component" value="Chromosome 6"/>
</dbReference>
<dbReference type="Bgee" id="ENSDARG00000044565">
    <property type="expression patterns" value="Expressed in presomitic mesoderm and 30 other cell types or tissues"/>
</dbReference>
<dbReference type="ExpressionAtlas" id="Q7ZU42">
    <property type="expression patterns" value="baseline and differential"/>
</dbReference>
<dbReference type="GO" id="GO:0005737">
    <property type="term" value="C:cytoplasm"/>
    <property type="evidence" value="ECO:0000318"/>
    <property type="project" value="GO_Central"/>
</dbReference>
<dbReference type="GO" id="GO:0005730">
    <property type="term" value="C:nucleolus"/>
    <property type="evidence" value="ECO:0007669"/>
    <property type="project" value="UniProtKB-SubCell"/>
</dbReference>
<dbReference type="GO" id="GO:0005524">
    <property type="term" value="F:ATP binding"/>
    <property type="evidence" value="ECO:0007669"/>
    <property type="project" value="UniProtKB-UniRule"/>
</dbReference>
<dbReference type="GO" id="GO:0016887">
    <property type="term" value="F:ATP hydrolysis activity"/>
    <property type="evidence" value="ECO:0000318"/>
    <property type="project" value="GO_Central"/>
</dbReference>
<dbReference type="GO" id="GO:0005525">
    <property type="term" value="F:GTP binding"/>
    <property type="evidence" value="ECO:0007669"/>
    <property type="project" value="InterPro"/>
</dbReference>
<dbReference type="GO" id="GO:0046872">
    <property type="term" value="F:metal ion binding"/>
    <property type="evidence" value="ECO:0007669"/>
    <property type="project" value="UniProtKB-KW"/>
</dbReference>
<dbReference type="GO" id="GO:0043023">
    <property type="term" value="F:ribosomal large subunit binding"/>
    <property type="evidence" value="ECO:0007669"/>
    <property type="project" value="UniProtKB-UniRule"/>
</dbReference>
<dbReference type="CDD" id="cd04867">
    <property type="entry name" value="TGS_YchF_OLA1"/>
    <property type="match status" value="1"/>
</dbReference>
<dbReference type="CDD" id="cd01900">
    <property type="entry name" value="YchF"/>
    <property type="match status" value="1"/>
</dbReference>
<dbReference type="FunFam" id="1.10.150.300:FF:000003">
    <property type="entry name" value="Obg-like ATPase 1"/>
    <property type="match status" value="1"/>
</dbReference>
<dbReference type="FunFam" id="3.10.20.30:FF:000029">
    <property type="entry name" value="Obg-like ATPase 1"/>
    <property type="match status" value="1"/>
</dbReference>
<dbReference type="Gene3D" id="3.10.20.30">
    <property type="match status" value="1"/>
</dbReference>
<dbReference type="Gene3D" id="3.40.50.300">
    <property type="entry name" value="P-loop containing nucleotide triphosphate hydrolases"/>
    <property type="match status" value="1"/>
</dbReference>
<dbReference type="Gene3D" id="1.10.150.300">
    <property type="entry name" value="TGS-like domain"/>
    <property type="match status" value="1"/>
</dbReference>
<dbReference type="HAMAP" id="MF_00944">
    <property type="entry name" value="YchF_OLA1_ATPase"/>
    <property type="match status" value="1"/>
</dbReference>
<dbReference type="InterPro" id="IPR004396">
    <property type="entry name" value="ATPase_YchF/OLA1"/>
</dbReference>
<dbReference type="InterPro" id="IPR012675">
    <property type="entry name" value="Beta-grasp_dom_sf"/>
</dbReference>
<dbReference type="InterPro" id="IPR031167">
    <property type="entry name" value="G_OBG"/>
</dbReference>
<dbReference type="InterPro" id="IPR006073">
    <property type="entry name" value="GTP-bd"/>
</dbReference>
<dbReference type="InterPro" id="IPR027417">
    <property type="entry name" value="P-loop_NTPase"/>
</dbReference>
<dbReference type="InterPro" id="IPR004095">
    <property type="entry name" value="TGS"/>
</dbReference>
<dbReference type="InterPro" id="IPR012676">
    <property type="entry name" value="TGS-like"/>
</dbReference>
<dbReference type="InterPro" id="IPR023192">
    <property type="entry name" value="TGS-like_dom_sf"/>
</dbReference>
<dbReference type="InterPro" id="IPR013029">
    <property type="entry name" value="YchF_C"/>
</dbReference>
<dbReference type="InterPro" id="IPR041706">
    <property type="entry name" value="YchF_N"/>
</dbReference>
<dbReference type="NCBIfam" id="TIGR00092">
    <property type="entry name" value="redox-regulated ATPase YchF"/>
    <property type="match status" value="1"/>
</dbReference>
<dbReference type="PANTHER" id="PTHR23305">
    <property type="entry name" value="OBG GTPASE FAMILY"/>
    <property type="match status" value="1"/>
</dbReference>
<dbReference type="PANTHER" id="PTHR23305:SF11">
    <property type="entry name" value="OBG-LIKE ATPASE 1"/>
    <property type="match status" value="1"/>
</dbReference>
<dbReference type="Pfam" id="PF01926">
    <property type="entry name" value="MMR_HSR1"/>
    <property type="match status" value="1"/>
</dbReference>
<dbReference type="Pfam" id="PF06071">
    <property type="entry name" value="YchF-GTPase_C"/>
    <property type="match status" value="1"/>
</dbReference>
<dbReference type="PIRSF" id="PIRSF006641">
    <property type="entry name" value="CHP00092"/>
    <property type="match status" value="1"/>
</dbReference>
<dbReference type="PRINTS" id="PR00326">
    <property type="entry name" value="GTP1OBG"/>
</dbReference>
<dbReference type="SUPFAM" id="SSF52540">
    <property type="entry name" value="P-loop containing nucleoside triphosphate hydrolases"/>
    <property type="match status" value="1"/>
</dbReference>
<dbReference type="SUPFAM" id="SSF81271">
    <property type="entry name" value="TGS-like"/>
    <property type="match status" value="1"/>
</dbReference>
<dbReference type="PROSITE" id="PS51710">
    <property type="entry name" value="G_OBG"/>
    <property type="match status" value="1"/>
</dbReference>
<dbReference type="PROSITE" id="PS51880">
    <property type="entry name" value="TGS"/>
    <property type="match status" value="1"/>
</dbReference>
<keyword id="KW-0067">ATP-binding</keyword>
<keyword id="KW-0963">Cytoplasm</keyword>
<keyword id="KW-0378">Hydrolase</keyword>
<keyword id="KW-0460">Magnesium</keyword>
<keyword id="KW-0479">Metal-binding</keyword>
<keyword id="KW-0547">Nucleotide-binding</keyword>
<keyword id="KW-0539">Nucleus</keyword>
<keyword id="KW-1185">Reference proteome</keyword>
<gene>
    <name type="primary">ola1</name>
    <name type="ORF">zgc:55768</name>
</gene>